<keyword id="KW-0025">Alternative splicing</keyword>
<keyword id="KW-0238">DNA-binding</keyword>
<keyword id="KW-0371">Homeobox</keyword>
<keyword id="KW-0539">Nucleus</keyword>
<keyword id="KW-1185">Reference proteome</keyword>
<keyword id="KW-0804">Transcription</keyword>
<keyword id="KW-0805">Transcription regulation</keyword>
<comment type="function">
    <text evidence="4">Isoform 3 acts as a transcription activator, but isoforms 1 and 2 do not.</text>
</comment>
<comment type="subcellular location">
    <subcellularLocation>
        <location evidence="5">Nucleus</location>
    </subcellularLocation>
</comment>
<comment type="alternative products">
    <event type="alternative splicing"/>
    <isoform>
        <id>Q0J6N4-1</id>
        <name>1</name>
        <name>OSH44</name>
        <sequence type="displayed"/>
    </isoform>
    <isoform>
        <id>Q0J6N4-2</id>
        <name>2</name>
        <name>OSH45</name>
        <sequence type="described" ref="VSP_036190"/>
    </isoform>
    <isoform>
        <id>Q0J6N4-3</id>
        <name>3</name>
        <name>OSH42</name>
        <sequence type="described" ref="VSP_036189 VSP_036191 VSP_036192"/>
    </isoform>
</comment>
<comment type="tissue specificity">
    <text evidence="4">Isoforms 1 and 2 are expressed in roots, stems, shoot meristem, leaf blades, leaf sheaths and flowers. Isoform 3 is expressed in stems, shoot meristem, rachis, leaf blades and leaf sheaths.</text>
</comment>
<comment type="similarity">
    <text evidence="2">Belongs to the TALE/KNOX homeobox family.</text>
</comment>
<comment type="sequence caution" evidence="5">
    <conflict type="erroneous gene model prediction">
        <sequence resource="EMBL-CDS" id="BAC57787"/>
    </conflict>
</comment>
<comment type="sequence caution" evidence="5">
    <conflict type="erroneous gene model prediction">
        <sequence resource="EMBL-CDS" id="BAD01204"/>
    </conflict>
</comment>
<comment type="sequence caution" evidence="5">
    <conflict type="erroneous gene model prediction">
        <sequence resource="EMBL-CDS" id="BAF23381"/>
    </conflict>
</comment>
<organism>
    <name type="scientific">Oryza sativa subsp. japonica</name>
    <name type="common">Rice</name>
    <dbReference type="NCBI Taxonomy" id="39947"/>
    <lineage>
        <taxon>Eukaryota</taxon>
        <taxon>Viridiplantae</taxon>
        <taxon>Streptophyta</taxon>
        <taxon>Embryophyta</taxon>
        <taxon>Tracheophyta</taxon>
        <taxon>Spermatophyta</taxon>
        <taxon>Magnoliopsida</taxon>
        <taxon>Liliopsida</taxon>
        <taxon>Poales</taxon>
        <taxon>Poaceae</taxon>
        <taxon>BOP clade</taxon>
        <taxon>Oryzoideae</taxon>
        <taxon>Oryzeae</taxon>
        <taxon>Oryzinae</taxon>
        <taxon>Oryza</taxon>
        <taxon>Oryza sativa</taxon>
    </lineage>
</organism>
<feature type="chain" id="PRO_0000360017" description="Homeobox protein knotted-1-like 13">
    <location>
        <begin position="1"/>
        <end position="374"/>
    </location>
</feature>
<feature type="domain" description="ELK" evidence="2">
    <location>
        <begin position="270"/>
        <end position="290"/>
    </location>
</feature>
<feature type="DNA-binding region" description="Homeobox; TALE-type" evidence="1">
    <location>
        <begin position="291"/>
        <end position="354"/>
    </location>
</feature>
<feature type="region of interest" description="Disordered" evidence="3">
    <location>
        <begin position="214"/>
        <end position="242"/>
    </location>
</feature>
<feature type="region of interest" description="Disordered" evidence="3">
    <location>
        <begin position="347"/>
        <end position="374"/>
    </location>
</feature>
<feature type="splice variant" id="VSP_036189" description="In isoform 3." evidence="5">
    <location>
        <begin position="1"/>
        <end position="196"/>
    </location>
</feature>
<feature type="splice variant" id="VSP_036190" description="In isoform 2." evidence="5">
    <original>SNAGDNNS</original>
    <variation>RAGGIHPKQ</variation>
    <location>
        <begin position="367"/>
        <end position="374"/>
    </location>
</feature>
<feature type="splice variant" id="VSP_036191" description="In isoform 3." evidence="5">
    <original>S</original>
    <variation>R</variation>
    <location>
        <position position="367"/>
    </location>
</feature>
<feature type="splice variant" id="VSP_036192" description="In isoform 3." evidence="5">
    <location>
        <begin position="368"/>
        <end position="374"/>
    </location>
</feature>
<sequence>MAFHGHLPHEMTMQALGADDAAVAAAAAAGGVGAGGAPAWMRYNDGSFLHLQTTSDSSASPSGAAAAAAAAAAAAAAGVQQWMGGGGGGEDAVAAAMGGGGEADAARCKAEILAHPLYEQLLSAHVACLRIATPVDQLPRIDAQLAQSQGVVAKYSALAAAAAGDDGRELDQFMTHYVLLLCSFKEQLQQHVRVHAMEAVMACWELEQNLQSLTGASPGEGTGATMSDGEDDQADSEANMYDPSLDGADNMGFGLPTESERSLMERVRQELKHELKQGYKEKLIDIREEILRKRRAGKLPGDTTSTLKAWWQSHAKWPYPTEEDKARLVQETGLQLKQINNWFINQRKRNWHSNPSSSTSVKTKRKSNAGDNNS</sequence>
<dbReference type="EMBL" id="D49704">
    <property type="protein sequence ID" value="BAA08552.1"/>
    <property type="molecule type" value="Genomic_DNA"/>
</dbReference>
<dbReference type="EMBL" id="D49704">
    <property type="protein sequence ID" value="BAA08553.1"/>
    <property type="molecule type" value="Genomic_DNA"/>
</dbReference>
<dbReference type="EMBL" id="D49704">
    <property type="protein sequence ID" value="BAA08554.1"/>
    <property type="molecule type" value="Genomic_DNA"/>
</dbReference>
<dbReference type="EMBL" id="AP003918">
    <property type="protein sequence ID" value="BAD01204.1"/>
    <property type="status" value="ALT_SEQ"/>
    <property type="molecule type" value="Genomic_DNA"/>
</dbReference>
<dbReference type="EMBL" id="AP005390">
    <property type="protein sequence ID" value="BAC57787.1"/>
    <property type="status" value="ALT_SEQ"/>
    <property type="molecule type" value="Genomic_DNA"/>
</dbReference>
<dbReference type="EMBL" id="AP008214">
    <property type="protein sequence ID" value="BAF23381.2"/>
    <property type="status" value="ALT_SEQ"/>
    <property type="molecule type" value="Genomic_DNA"/>
</dbReference>
<dbReference type="EMBL" id="AP014964">
    <property type="status" value="NOT_ANNOTATED_CDS"/>
    <property type="molecule type" value="Genomic_DNA"/>
</dbReference>
<dbReference type="PIR" id="T03874">
    <property type="entry name" value="T03874"/>
</dbReference>
<dbReference type="PIR" id="T03875">
    <property type="entry name" value="T03875"/>
</dbReference>
<dbReference type="SMR" id="Q0J6N4"/>
<dbReference type="FunCoup" id="Q0J6N4">
    <property type="interactions" value="334"/>
</dbReference>
<dbReference type="STRING" id="39947.Q0J6N4"/>
<dbReference type="PaxDb" id="39947-Q0J6N4"/>
<dbReference type="KEGG" id="dosa:Os08g0292900"/>
<dbReference type="eggNOG" id="KOG0773">
    <property type="taxonomic scope" value="Eukaryota"/>
</dbReference>
<dbReference type="InParanoid" id="Q0J6N4"/>
<dbReference type="Proteomes" id="UP000000763">
    <property type="component" value="Chromosome 8"/>
</dbReference>
<dbReference type="Proteomes" id="UP000059680">
    <property type="component" value="Chromosome 8"/>
</dbReference>
<dbReference type="GO" id="GO:0005634">
    <property type="term" value="C:nucleus"/>
    <property type="evidence" value="ECO:0000318"/>
    <property type="project" value="GO_Central"/>
</dbReference>
<dbReference type="GO" id="GO:0003677">
    <property type="term" value="F:DNA binding"/>
    <property type="evidence" value="ECO:0007669"/>
    <property type="project" value="UniProtKB-KW"/>
</dbReference>
<dbReference type="GO" id="GO:0006355">
    <property type="term" value="P:regulation of DNA-templated transcription"/>
    <property type="evidence" value="ECO:0007669"/>
    <property type="project" value="InterPro"/>
</dbReference>
<dbReference type="CDD" id="cd00086">
    <property type="entry name" value="homeodomain"/>
    <property type="match status" value="1"/>
</dbReference>
<dbReference type="FunFam" id="1.10.10.60:FF:000143">
    <property type="entry name" value="homeobox protein knotted-1-like 3 isoform X1"/>
    <property type="match status" value="1"/>
</dbReference>
<dbReference type="Gene3D" id="1.10.10.60">
    <property type="entry name" value="Homeodomain-like"/>
    <property type="match status" value="1"/>
</dbReference>
<dbReference type="InterPro" id="IPR005539">
    <property type="entry name" value="ELK_dom"/>
</dbReference>
<dbReference type="InterPro" id="IPR001356">
    <property type="entry name" value="HD"/>
</dbReference>
<dbReference type="InterPro" id="IPR009057">
    <property type="entry name" value="Homeodomain-like_sf"/>
</dbReference>
<dbReference type="InterPro" id="IPR008422">
    <property type="entry name" value="KN_HD"/>
</dbReference>
<dbReference type="InterPro" id="IPR005540">
    <property type="entry name" value="KNOX1"/>
</dbReference>
<dbReference type="InterPro" id="IPR005541">
    <property type="entry name" value="KNOX2"/>
</dbReference>
<dbReference type="InterPro" id="IPR050224">
    <property type="entry name" value="TALE_homeobox"/>
</dbReference>
<dbReference type="PANTHER" id="PTHR11850">
    <property type="entry name" value="HOMEOBOX PROTEIN TRANSCRIPTION FACTORS"/>
    <property type="match status" value="1"/>
</dbReference>
<dbReference type="Pfam" id="PF03789">
    <property type="entry name" value="ELK"/>
    <property type="match status" value="1"/>
</dbReference>
<dbReference type="Pfam" id="PF05920">
    <property type="entry name" value="Homeobox_KN"/>
    <property type="match status" value="1"/>
</dbReference>
<dbReference type="Pfam" id="PF03790">
    <property type="entry name" value="KNOX1"/>
    <property type="match status" value="1"/>
</dbReference>
<dbReference type="Pfam" id="PF03791">
    <property type="entry name" value="KNOX2"/>
    <property type="match status" value="1"/>
</dbReference>
<dbReference type="SMART" id="SM01188">
    <property type="entry name" value="ELK"/>
    <property type="match status" value="1"/>
</dbReference>
<dbReference type="SMART" id="SM00389">
    <property type="entry name" value="HOX"/>
    <property type="match status" value="1"/>
</dbReference>
<dbReference type="SMART" id="SM01255">
    <property type="entry name" value="KNOX1"/>
    <property type="match status" value="1"/>
</dbReference>
<dbReference type="SMART" id="SM01256">
    <property type="entry name" value="KNOX2"/>
    <property type="match status" value="1"/>
</dbReference>
<dbReference type="SUPFAM" id="SSF46689">
    <property type="entry name" value="Homeodomain-like"/>
    <property type="match status" value="1"/>
</dbReference>
<dbReference type="PROSITE" id="PS51213">
    <property type="entry name" value="ELK"/>
    <property type="match status" value="1"/>
</dbReference>
<dbReference type="PROSITE" id="PS00027">
    <property type="entry name" value="HOMEOBOX_1"/>
    <property type="match status" value="1"/>
</dbReference>
<dbReference type="PROSITE" id="PS50071">
    <property type="entry name" value="HOMEOBOX_2"/>
    <property type="match status" value="1"/>
</dbReference>
<name>KNOSD_ORYSJ</name>
<proteinExistence type="evidence at transcript level"/>
<protein>
    <recommendedName>
        <fullName>Homeobox protein knotted-1-like 13</fullName>
    </recommendedName>
    <alternativeName>
        <fullName>Homeobox protein OSH45</fullName>
    </alternativeName>
</protein>
<accession>Q0J6N4</accession>
<accession>P93423</accession>
<accession>P93424</accession>
<accession>P94016</accession>
<accession>Q7DN84</accession>
<accession>Q84YX8</accession>
<gene>
    <name type="primary">OSH45</name>
    <name type="ordered locus">Os08g0292900</name>
    <name type="ordered locus">LOC_Os08g19650</name>
    <name type="ORF">OJ1705_A03.8</name>
    <name type="ORF">OSJNBb0075O18.121</name>
</gene>
<reference key="1">
    <citation type="journal article" date="1995" name="Plant J.">
        <title>Alternative RNA products from a rice homeobox gene.</title>
        <authorList>
            <person name="Tamaoki M."/>
            <person name="Tsugawa H."/>
            <person name="Minami E."/>
            <person name="Kayano T."/>
            <person name="Yamamoto N."/>
            <person name="Kano-Murakami Y."/>
            <person name="Matsuoka M."/>
        </authorList>
    </citation>
    <scope>NUCLEOTIDE SEQUENCE [GENOMIC DNA] (ISOFORMS 1; 2 AND 3)</scope>
    <scope>FUNCTION</scope>
    <scope>TISSUE SPECIFICITY</scope>
    <scope>ALTERNATIVE SPLICING</scope>
    <source>
        <strain>cv. Nipponbare</strain>
    </source>
</reference>
<reference key="2">
    <citation type="journal article" date="2005" name="Nature">
        <title>The map-based sequence of the rice genome.</title>
        <authorList>
            <consortium name="International rice genome sequencing project (IRGSP)"/>
        </authorList>
    </citation>
    <scope>NUCLEOTIDE SEQUENCE [LARGE SCALE GENOMIC DNA]</scope>
    <source>
        <strain>cv. Nipponbare</strain>
    </source>
</reference>
<reference key="3">
    <citation type="journal article" date="2008" name="Nucleic Acids Res.">
        <title>The rice annotation project database (RAP-DB): 2008 update.</title>
        <authorList>
            <consortium name="The rice annotation project (RAP)"/>
        </authorList>
    </citation>
    <scope>GENOME REANNOTATION</scope>
    <source>
        <strain>cv. Nipponbare</strain>
    </source>
</reference>
<reference key="4">
    <citation type="journal article" date="2013" name="Rice">
        <title>Improvement of the Oryza sativa Nipponbare reference genome using next generation sequence and optical map data.</title>
        <authorList>
            <person name="Kawahara Y."/>
            <person name="de la Bastide M."/>
            <person name="Hamilton J.P."/>
            <person name="Kanamori H."/>
            <person name="McCombie W.R."/>
            <person name="Ouyang S."/>
            <person name="Schwartz D.C."/>
            <person name="Tanaka T."/>
            <person name="Wu J."/>
            <person name="Zhou S."/>
            <person name="Childs K.L."/>
            <person name="Davidson R.M."/>
            <person name="Lin H."/>
            <person name="Quesada-Ocampo L."/>
            <person name="Vaillancourt B."/>
            <person name="Sakai H."/>
            <person name="Lee S.S."/>
            <person name="Kim J."/>
            <person name="Numa H."/>
            <person name="Itoh T."/>
            <person name="Buell C.R."/>
            <person name="Matsumoto T."/>
        </authorList>
    </citation>
    <scope>GENOME REANNOTATION</scope>
    <source>
        <strain>cv. Nipponbare</strain>
    </source>
</reference>
<reference key="5">
    <citation type="journal article" date="2008" name="FEBS J.">
        <title>Genome-wide identification, classification, evolutionary expansion and expression analyses of homeobox genes in rice.</title>
        <authorList>
            <person name="Jain M."/>
            <person name="Tyagi A.K."/>
            <person name="Khurana J.P."/>
        </authorList>
    </citation>
    <scope>GENE FAMILY</scope>
    <scope>NOMENCLATURE</scope>
</reference>
<evidence type="ECO:0000255" key="1">
    <source>
        <dbReference type="PROSITE-ProRule" id="PRU00108"/>
    </source>
</evidence>
<evidence type="ECO:0000255" key="2">
    <source>
        <dbReference type="PROSITE-ProRule" id="PRU00559"/>
    </source>
</evidence>
<evidence type="ECO:0000256" key="3">
    <source>
        <dbReference type="SAM" id="MobiDB-lite"/>
    </source>
</evidence>
<evidence type="ECO:0000269" key="4">
    <source>
    </source>
</evidence>
<evidence type="ECO:0000305" key="5"/>